<reference key="1">
    <citation type="journal article" date="2002" name="Proc. Natl. Acad. Sci. U.S.A.">
        <title>Genome sequence and comparative microarray analysis of serotype M18 group A Streptococcus strains associated with acute rheumatic fever outbreaks.</title>
        <authorList>
            <person name="Smoot J.C."/>
            <person name="Barbian K.D."/>
            <person name="Van Gompel J.J."/>
            <person name="Smoot L.M."/>
            <person name="Chaussee M.S."/>
            <person name="Sylva G.L."/>
            <person name="Sturdevant D.E."/>
            <person name="Ricklefs S.M."/>
            <person name="Porcella S.F."/>
            <person name="Parkins L.D."/>
            <person name="Beres S.B."/>
            <person name="Campbell D.S."/>
            <person name="Smith T.M."/>
            <person name="Zhang Q."/>
            <person name="Kapur V."/>
            <person name="Daly J.A."/>
            <person name="Veasy L.G."/>
            <person name="Musser J.M."/>
        </authorList>
    </citation>
    <scope>NUCLEOTIDE SEQUENCE [LARGE SCALE GENOMIC DNA]</scope>
    <source>
        <strain>MGAS8232</strain>
    </source>
</reference>
<accession>Q8P2B4</accession>
<sequence length="481" mass="53479">MITIEQLLDILKKDHNFREVLDADGYHYHYQGLSFERLSYDSRQVDGKTLFFAKGATFKADYLKEAITNGLQLYISEVDYELGIPVVLVTDIKKAMSLIAMAFYGNPQEKLKLLAFTGTKGKTTAAYFAYHMLKESYKPAMFSTMNTTLDGKTFFKSQLTTPESLDLFAMMAECVTNGMTHLIMEVSSQAYLVDRVYGLTFDVGVFLNISPDHIGPIEHPTFEDYFYHKRLLMENSRAVVINSGMDHFSFLADQVADQEHVFYGPLSDNQITTSQAFSFEAKGQLAGHYDIQLIGHFNQENAMAAGLACLRLGASLADIQKGIAKTRVPGRMEVLTMTNHAKVFVDYAHNGDSLEKLLSVVEEHQTGKLMLILGAPGNKGESRRADFGRVIHQHPNLTVILTADDPNFEDPEDISKEIASHIARPVEIISDREQAIQKAMSLCQGAKDAVIIAGKGADAYQIVKGQQVAYAGDLAIAKHYL</sequence>
<feature type="chain" id="PRO_0000101958" description="UDP-N-acetylmuramoyl-L-alanyl-D-glutamate--L-lysine ligase">
    <location>
        <begin position="1"/>
        <end position="481"/>
    </location>
</feature>
<feature type="short sequence motif" description="L-lysine recognition motif">
    <location>
        <begin position="404"/>
        <end position="407"/>
    </location>
</feature>
<feature type="binding site" evidence="1">
    <location>
        <position position="42"/>
    </location>
    <ligand>
        <name>UDP-N-acetyl-alpha-D-muramoyl-L-alanyl-D-glutamate</name>
        <dbReference type="ChEBI" id="CHEBI:83900"/>
    </ligand>
</feature>
<feature type="binding site" evidence="1">
    <location>
        <begin position="118"/>
        <end position="124"/>
    </location>
    <ligand>
        <name>ATP</name>
        <dbReference type="ChEBI" id="CHEBI:30616"/>
    </ligand>
</feature>
<feature type="binding site" evidence="1">
    <location>
        <position position="158"/>
    </location>
    <ligand>
        <name>UDP-N-acetyl-alpha-D-muramoyl-L-alanyl-D-glutamate</name>
        <dbReference type="ChEBI" id="CHEBI:83900"/>
    </ligand>
</feature>
<feature type="binding site" evidence="1">
    <location>
        <begin position="160"/>
        <end position="161"/>
    </location>
    <ligand>
        <name>UDP-N-acetyl-alpha-D-muramoyl-L-alanyl-D-glutamate</name>
        <dbReference type="ChEBI" id="CHEBI:83900"/>
    </ligand>
</feature>
<feature type="binding site" evidence="1">
    <location>
        <position position="187"/>
    </location>
    <ligand>
        <name>UDP-N-acetyl-alpha-D-muramoyl-L-alanyl-D-glutamate</name>
        <dbReference type="ChEBI" id="CHEBI:83900"/>
    </ligand>
</feature>
<feature type="binding site" evidence="1">
    <location>
        <position position="195"/>
    </location>
    <ligand>
        <name>UDP-N-acetyl-alpha-D-muramoyl-L-alanyl-D-glutamate</name>
        <dbReference type="ChEBI" id="CHEBI:83900"/>
    </ligand>
</feature>
<feature type="modified residue" description="N6-carboxylysine" evidence="1">
    <location>
        <position position="229"/>
    </location>
</feature>
<keyword id="KW-0067">ATP-binding</keyword>
<keyword id="KW-0131">Cell cycle</keyword>
<keyword id="KW-0132">Cell division</keyword>
<keyword id="KW-0133">Cell shape</keyword>
<keyword id="KW-0961">Cell wall biogenesis/degradation</keyword>
<keyword id="KW-0963">Cytoplasm</keyword>
<keyword id="KW-0436">Ligase</keyword>
<keyword id="KW-0547">Nucleotide-binding</keyword>
<keyword id="KW-0573">Peptidoglycan synthesis</keyword>
<evidence type="ECO:0000255" key="1">
    <source>
        <dbReference type="HAMAP-Rule" id="MF_00208"/>
    </source>
</evidence>
<dbReference type="EC" id="6.3.2.7" evidence="1"/>
<dbReference type="EMBL" id="AE009949">
    <property type="protein sequence ID" value="AAL97178.1"/>
    <property type="molecule type" value="Genomic_DNA"/>
</dbReference>
<dbReference type="RefSeq" id="WP_002990934.1">
    <property type="nucleotide sequence ID" value="NC_003485.1"/>
</dbReference>
<dbReference type="SMR" id="Q8P2B4"/>
<dbReference type="KEGG" id="spm:spyM18_0440"/>
<dbReference type="HOGENOM" id="CLU_022291_4_2_9"/>
<dbReference type="UniPathway" id="UPA00219"/>
<dbReference type="GO" id="GO:0005737">
    <property type="term" value="C:cytoplasm"/>
    <property type="evidence" value="ECO:0007669"/>
    <property type="project" value="UniProtKB-SubCell"/>
</dbReference>
<dbReference type="GO" id="GO:0005524">
    <property type="term" value="F:ATP binding"/>
    <property type="evidence" value="ECO:0007669"/>
    <property type="project" value="UniProtKB-UniRule"/>
</dbReference>
<dbReference type="GO" id="GO:0000287">
    <property type="term" value="F:magnesium ion binding"/>
    <property type="evidence" value="ECO:0007669"/>
    <property type="project" value="UniProtKB-UniRule"/>
</dbReference>
<dbReference type="GO" id="GO:0047482">
    <property type="term" value="F:UDP-N-acetylmuramoyl-L-alanyl-D-glutamate-L-lysine ligase activity"/>
    <property type="evidence" value="ECO:0007669"/>
    <property type="project" value="UniProtKB-UniRule"/>
</dbReference>
<dbReference type="GO" id="GO:0051301">
    <property type="term" value="P:cell division"/>
    <property type="evidence" value="ECO:0007669"/>
    <property type="project" value="UniProtKB-KW"/>
</dbReference>
<dbReference type="GO" id="GO:0071555">
    <property type="term" value="P:cell wall organization"/>
    <property type="evidence" value="ECO:0007669"/>
    <property type="project" value="UniProtKB-KW"/>
</dbReference>
<dbReference type="GO" id="GO:0009252">
    <property type="term" value="P:peptidoglycan biosynthetic process"/>
    <property type="evidence" value="ECO:0007669"/>
    <property type="project" value="UniProtKB-UniRule"/>
</dbReference>
<dbReference type="GO" id="GO:0008360">
    <property type="term" value="P:regulation of cell shape"/>
    <property type="evidence" value="ECO:0007669"/>
    <property type="project" value="UniProtKB-KW"/>
</dbReference>
<dbReference type="Gene3D" id="3.90.190.20">
    <property type="entry name" value="Mur ligase, C-terminal domain"/>
    <property type="match status" value="1"/>
</dbReference>
<dbReference type="Gene3D" id="3.40.1190.10">
    <property type="entry name" value="Mur-like, catalytic domain"/>
    <property type="match status" value="1"/>
</dbReference>
<dbReference type="Gene3D" id="3.40.1390.10">
    <property type="entry name" value="MurE/MurF, N-terminal domain"/>
    <property type="match status" value="1"/>
</dbReference>
<dbReference type="HAMAP" id="MF_00208">
    <property type="entry name" value="MurE"/>
    <property type="match status" value="1"/>
</dbReference>
<dbReference type="InterPro" id="IPR036565">
    <property type="entry name" value="Mur-like_cat_sf"/>
</dbReference>
<dbReference type="InterPro" id="IPR004101">
    <property type="entry name" value="Mur_ligase_C"/>
</dbReference>
<dbReference type="InterPro" id="IPR036615">
    <property type="entry name" value="Mur_ligase_C_dom_sf"/>
</dbReference>
<dbReference type="InterPro" id="IPR013221">
    <property type="entry name" value="Mur_ligase_cen"/>
</dbReference>
<dbReference type="InterPro" id="IPR035911">
    <property type="entry name" value="MurE/MurF_N"/>
</dbReference>
<dbReference type="InterPro" id="IPR005761">
    <property type="entry name" value="UDP-N-AcMur-Glu-dNH2Pim_ligase"/>
</dbReference>
<dbReference type="NCBIfam" id="TIGR01085">
    <property type="entry name" value="murE"/>
    <property type="match status" value="1"/>
</dbReference>
<dbReference type="NCBIfam" id="NF010628">
    <property type="entry name" value="PRK14022.1"/>
    <property type="match status" value="1"/>
</dbReference>
<dbReference type="PANTHER" id="PTHR23135">
    <property type="entry name" value="MUR LIGASE FAMILY MEMBER"/>
    <property type="match status" value="1"/>
</dbReference>
<dbReference type="PANTHER" id="PTHR23135:SF4">
    <property type="entry name" value="UDP-N-ACETYLMURAMOYL-L-ALANYL-D-GLUTAMATE--2,6-DIAMINOPIMELATE LIGASE MURE HOMOLOG, CHLOROPLASTIC"/>
    <property type="match status" value="1"/>
</dbReference>
<dbReference type="Pfam" id="PF02875">
    <property type="entry name" value="Mur_ligase_C"/>
    <property type="match status" value="1"/>
</dbReference>
<dbReference type="Pfam" id="PF08245">
    <property type="entry name" value="Mur_ligase_M"/>
    <property type="match status" value="1"/>
</dbReference>
<dbReference type="SUPFAM" id="SSF53623">
    <property type="entry name" value="MurD-like peptide ligases, catalytic domain"/>
    <property type="match status" value="1"/>
</dbReference>
<dbReference type="SUPFAM" id="SSF53244">
    <property type="entry name" value="MurD-like peptide ligases, peptide-binding domain"/>
    <property type="match status" value="1"/>
</dbReference>
<dbReference type="SUPFAM" id="SSF63418">
    <property type="entry name" value="MurE/MurF N-terminal domain"/>
    <property type="match status" value="1"/>
</dbReference>
<proteinExistence type="inferred from homology"/>
<organism>
    <name type="scientific">Streptococcus pyogenes serotype M18 (strain MGAS8232)</name>
    <dbReference type="NCBI Taxonomy" id="186103"/>
    <lineage>
        <taxon>Bacteria</taxon>
        <taxon>Bacillati</taxon>
        <taxon>Bacillota</taxon>
        <taxon>Bacilli</taxon>
        <taxon>Lactobacillales</taxon>
        <taxon>Streptococcaceae</taxon>
        <taxon>Streptococcus</taxon>
    </lineage>
</organism>
<gene>
    <name evidence="1" type="primary">murE</name>
    <name type="ordered locus">spyM18_0440</name>
</gene>
<name>MURE_STRP8</name>
<protein>
    <recommendedName>
        <fullName evidence="1">UDP-N-acetylmuramoyl-L-alanyl-D-glutamate--L-lysine ligase</fullName>
        <ecNumber evidence="1">6.3.2.7</ecNumber>
    </recommendedName>
    <alternativeName>
        <fullName evidence="1">L-lysine-adding enzyme</fullName>
    </alternativeName>
    <alternativeName>
        <fullName evidence="1">UDP-MurNAc-L-Ala-D-Glu:L-Lys ligase</fullName>
    </alternativeName>
    <alternativeName>
        <fullName evidence="1">UDP-MurNAc-tripeptide synthetase</fullName>
    </alternativeName>
    <alternativeName>
        <fullName evidence="1">UDP-N-acetylmuramyl-tripeptide synthetase</fullName>
    </alternativeName>
</protein>
<comment type="function">
    <text evidence="1">Catalyzes the addition of L-lysine to the nucleotide precursor UDP-N-acetylmuramoyl-L-alanyl-D-glutamate (UMAG) in the biosynthesis of bacterial cell-wall peptidoglycan.</text>
</comment>
<comment type="catalytic activity">
    <reaction evidence="1">
        <text>UDP-N-acetyl-alpha-D-muramoyl-L-alanyl-D-glutamate + L-lysine + ATP = UDP-N-acetyl-alpha-D-muramoyl-L-alanyl-gamma-D-glutamyl-L-lysine + ADP + phosphate + H(+)</text>
        <dbReference type="Rhea" id="RHEA:17969"/>
        <dbReference type="ChEBI" id="CHEBI:15378"/>
        <dbReference type="ChEBI" id="CHEBI:30616"/>
        <dbReference type="ChEBI" id="CHEBI:32551"/>
        <dbReference type="ChEBI" id="CHEBI:43474"/>
        <dbReference type="ChEBI" id="CHEBI:83900"/>
        <dbReference type="ChEBI" id="CHEBI:83903"/>
        <dbReference type="ChEBI" id="CHEBI:456216"/>
        <dbReference type="EC" id="6.3.2.7"/>
    </reaction>
</comment>
<comment type="pathway">
    <text evidence="1">Cell wall biogenesis; peptidoglycan biosynthesis.</text>
</comment>
<comment type="subcellular location">
    <subcellularLocation>
        <location evidence="1">Cytoplasm</location>
    </subcellularLocation>
</comment>
<comment type="PTM">
    <text evidence="1">Carboxylation is probably crucial for Mg(2+) binding and, consequently, for the gamma-phosphate positioning of ATP.</text>
</comment>
<comment type="similarity">
    <text evidence="1">Belongs to the MurCDEF family. MurE subfamily.</text>
</comment>